<name>TRPC_STRT2</name>
<dbReference type="EC" id="4.1.1.48" evidence="1"/>
<dbReference type="EMBL" id="CP000023">
    <property type="protein sequence ID" value="AAV61193.1"/>
    <property type="molecule type" value="Genomic_DNA"/>
</dbReference>
<dbReference type="RefSeq" id="WP_011226423.1">
    <property type="nucleotide sequence ID" value="NC_006448.1"/>
</dbReference>
<dbReference type="SMR" id="Q5M348"/>
<dbReference type="STRING" id="264199.stu1590"/>
<dbReference type="GeneID" id="66899336"/>
<dbReference type="KEGG" id="stl:stu1590"/>
<dbReference type="PATRIC" id="fig|264199.4.peg.1562"/>
<dbReference type="eggNOG" id="COG0134">
    <property type="taxonomic scope" value="Bacteria"/>
</dbReference>
<dbReference type="HOGENOM" id="CLU_034247_2_1_9"/>
<dbReference type="UniPathway" id="UPA00035">
    <property type="reaction ID" value="UER00043"/>
</dbReference>
<dbReference type="Proteomes" id="UP000001170">
    <property type="component" value="Chromosome"/>
</dbReference>
<dbReference type="GO" id="GO:0004425">
    <property type="term" value="F:indole-3-glycerol-phosphate synthase activity"/>
    <property type="evidence" value="ECO:0007669"/>
    <property type="project" value="UniProtKB-UniRule"/>
</dbReference>
<dbReference type="GO" id="GO:0004640">
    <property type="term" value="F:phosphoribosylanthranilate isomerase activity"/>
    <property type="evidence" value="ECO:0007669"/>
    <property type="project" value="TreeGrafter"/>
</dbReference>
<dbReference type="GO" id="GO:0000162">
    <property type="term" value="P:L-tryptophan biosynthetic process"/>
    <property type="evidence" value="ECO:0007669"/>
    <property type="project" value="UniProtKB-UniRule"/>
</dbReference>
<dbReference type="CDD" id="cd00331">
    <property type="entry name" value="IGPS"/>
    <property type="match status" value="1"/>
</dbReference>
<dbReference type="FunFam" id="3.20.20.70:FF:000024">
    <property type="entry name" value="Indole-3-glycerol phosphate synthase"/>
    <property type="match status" value="1"/>
</dbReference>
<dbReference type="Gene3D" id="3.20.20.70">
    <property type="entry name" value="Aldolase class I"/>
    <property type="match status" value="1"/>
</dbReference>
<dbReference type="HAMAP" id="MF_00134_B">
    <property type="entry name" value="IGPS_B"/>
    <property type="match status" value="1"/>
</dbReference>
<dbReference type="InterPro" id="IPR013785">
    <property type="entry name" value="Aldolase_TIM"/>
</dbReference>
<dbReference type="InterPro" id="IPR045186">
    <property type="entry name" value="Indole-3-glycerol_P_synth"/>
</dbReference>
<dbReference type="InterPro" id="IPR013798">
    <property type="entry name" value="Indole-3-glycerol_P_synth_dom"/>
</dbReference>
<dbReference type="InterPro" id="IPR001468">
    <property type="entry name" value="Indole-3-GlycerolPSynthase_CS"/>
</dbReference>
<dbReference type="InterPro" id="IPR011060">
    <property type="entry name" value="RibuloseP-bd_barrel"/>
</dbReference>
<dbReference type="NCBIfam" id="NF001371">
    <property type="entry name" value="PRK00278.1-3"/>
    <property type="match status" value="1"/>
</dbReference>
<dbReference type="NCBIfam" id="NF001377">
    <property type="entry name" value="PRK00278.2-4"/>
    <property type="match status" value="1"/>
</dbReference>
<dbReference type="PANTHER" id="PTHR22854:SF2">
    <property type="entry name" value="INDOLE-3-GLYCEROL-PHOSPHATE SYNTHASE"/>
    <property type="match status" value="1"/>
</dbReference>
<dbReference type="PANTHER" id="PTHR22854">
    <property type="entry name" value="TRYPTOPHAN BIOSYNTHESIS PROTEIN"/>
    <property type="match status" value="1"/>
</dbReference>
<dbReference type="Pfam" id="PF00218">
    <property type="entry name" value="IGPS"/>
    <property type="match status" value="1"/>
</dbReference>
<dbReference type="SUPFAM" id="SSF51366">
    <property type="entry name" value="Ribulose-phoshate binding barrel"/>
    <property type="match status" value="1"/>
</dbReference>
<dbReference type="PROSITE" id="PS00614">
    <property type="entry name" value="IGPS"/>
    <property type="match status" value="1"/>
</dbReference>
<comment type="catalytic activity">
    <reaction evidence="1">
        <text>1-(2-carboxyphenylamino)-1-deoxy-D-ribulose 5-phosphate + H(+) = (1S,2R)-1-C-(indol-3-yl)glycerol 3-phosphate + CO2 + H2O</text>
        <dbReference type="Rhea" id="RHEA:23476"/>
        <dbReference type="ChEBI" id="CHEBI:15377"/>
        <dbReference type="ChEBI" id="CHEBI:15378"/>
        <dbReference type="ChEBI" id="CHEBI:16526"/>
        <dbReference type="ChEBI" id="CHEBI:58613"/>
        <dbReference type="ChEBI" id="CHEBI:58866"/>
        <dbReference type="EC" id="4.1.1.48"/>
    </reaction>
</comment>
<comment type="pathway">
    <text evidence="1">Amino-acid biosynthesis; L-tryptophan biosynthesis; L-tryptophan from chorismate: step 4/5.</text>
</comment>
<comment type="similarity">
    <text evidence="1">Belongs to the TrpC family.</text>
</comment>
<keyword id="KW-0028">Amino-acid biosynthesis</keyword>
<keyword id="KW-0057">Aromatic amino acid biosynthesis</keyword>
<keyword id="KW-0210">Decarboxylase</keyword>
<keyword id="KW-0456">Lyase</keyword>
<keyword id="KW-1185">Reference proteome</keyword>
<keyword id="KW-0822">Tryptophan biosynthesis</keyword>
<evidence type="ECO:0000255" key="1">
    <source>
        <dbReference type="HAMAP-Rule" id="MF_00134"/>
    </source>
</evidence>
<sequence>MSKAFLPTILEQKGKEVSQLVMEDLQPLRQTYRLYDFLKSNQNKLQIISEVKKASPSMGDINLDVDIVAQAKTYEENGAAMISVLTDEVFFKGDISYLKEISTQVAIPTLAKDFIIDEKQIVRSRNAGATVILLIVAALPEARLKELYDFATSLGLEVLVETHNLPELEVAHRIGAEIIGVNNRNLVTFETDINTSLELSTHFKDKPVYISESAIFTGQDAALVAPYFNGILVGTALMTADNVAKKVKELQIDKG</sequence>
<accession>Q5M348</accession>
<reference key="1">
    <citation type="journal article" date="2004" name="Nat. Biotechnol.">
        <title>Complete sequence and comparative genome analysis of the dairy bacterium Streptococcus thermophilus.</title>
        <authorList>
            <person name="Bolotin A."/>
            <person name="Quinquis B."/>
            <person name="Renault P."/>
            <person name="Sorokin A."/>
            <person name="Ehrlich S.D."/>
            <person name="Kulakauskas S."/>
            <person name="Lapidus A."/>
            <person name="Goltsman E."/>
            <person name="Mazur M."/>
            <person name="Pusch G.D."/>
            <person name="Fonstein M."/>
            <person name="Overbeek R."/>
            <person name="Kyprides N."/>
            <person name="Purnelle B."/>
            <person name="Prozzi D."/>
            <person name="Ngui K."/>
            <person name="Masuy D."/>
            <person name="Hancy F."/>
            <person name="Burteau S."/>
            <person name="Boutry M."/>
            <person name="Delcour J."/>
            <person name="Goffeau A."/>
            <person name="Hols P."/>
        </authorList>
    </citation>
    <scope>NUCLEOTIDE SEQUENCE [LARGE SCALE GENOMIC DNA]</scope>
    <source>
        <strain>ATCC BAA-250 / LMG 18311</strain>
    </source>
</reference>
<gene>
    <name evidence="1" type="primary">trpC</name>
    <name type="ordered locus">stu1590</name>
</gene>
<protein>
    <recommendedName>
        <fullName evidence="1">Indole-3-glycerol phosphate synthase</fullName>
        <shortName evidence="1">IGPS</shortName>
        <ecNumber evidence="1">4.1.1.48</ecNumber>
    </recommendedName>
</protein>
<organism>
    <name type="scientific">Streptococcus thermophilus (strain ATCC BAA-250 / LMG 18311)</name>
    <dbReference type="NCBI Taxonomy" id="264199"/>
    <lineage>
        <taxon>Bacteria</taxon>
        <taxon>Bacillati</taxon>
        <taxon>Bacillota</taxon>
        <taxon>Bacilli</taxon>
        <taxon>Lactobacillales</taxon>
        <taxon>Streptococcaceae</taxon>
        <taxon>Streptococcus</taxon>
    </lineage>
</organism>
<feature type="chain" id="PRO_1000095901" description="Indole-3-glycerol phosphate synthase">
    <location>
        <begin position="1"/>
        <end position="255"/>
    </location>
</feature>
<proteinExistence type="inferred from homology"/>